<accession>Q8Z9N1</accession>
<organism>
    <name type="scientific">Salmonella typhi</name>
    <dbReference type="NCBI Taxonomy" id="90370"/>
    <lineage>
        <taxon>Bacteria</taxon>
        <taxon>Pseudomonadati</taxon>
        <taxon>Pseudomonadota</taxon>
        <taxon>Gammaproteobacteria</taxon>
        <taxon>Enterobacterales</taxon>
        <taxon>Enterobacteriaceae</taxon>
        <taxon>Salmonella</taxon>
    </lineage>
</organism>
<dbReference type="EC" id="3.4.23.36" evidence="1"/>
<dbReference type="EMBL" id="AL513382">
    <property type="protein sequence ID" value="CAD01202.1"/>
    <property type="molecule type" value="Genomic_DNA"/>
</dbReference>
<dbReference type="EMBL" id="AE014613">
    <property type="protein sequence ID" value="AAO67782.1"/>
    <property type="molecule type" value="Genomic_DNA"/>
</dbReference>
<dbReference type="RefSeq" id="NP_454658.1">
    <property type="nucleotide sequence ID" value="NC_003198.1"/>
</dbReference>
<dbReference type="RefSeq" id="WP_000042743.1">
    <property type="nucleotide sequence ID" value="NZ_WSUR01000014.1"/>
</dbReference>
<dbReference type="SMR" id="Q8Z9N1"/>
<dbReference type="STRING" id="220341.gene:17584104"/>
<dbReference type="MEROPS" id="A08.001"/>
<dbReference type="KEGG" id="stt:t0049"/>
<dbReference type="KEGG" id="sty:STY0056"/>
<dbReference type="PATRIC" id="fig|220341.7.peg.56"/>
<dbReference type="eggNOG" id="COG0597">
    <property type="taxonomic scope" value="Bacteria"/>
</dbReference>
<dbReference type="HOGENOM" id="CLU_083252_4_0_6"/>
<dbReference type="OMA" id="NRWYFPA"/>
<dbReference type="OrthoDB" id="9810259at2"/>
<dbReference type="UniPathway" id="UPA00665"/>
<dbReference type="Proteomes" id="UP000000541">
    <property type="component" value="Chromosome"/>
</dbReference>
<dbReference type="Proteomes" id="UP000002670">
    <property type="component" value="Chromosome"/>
</dbReference>
<dbReference type="GO" id="GO:0005886">
    <property type="term" value="C:plasma membrane"/>
    <property type="evidence" value="ECO:0007669"/>
    <property type="project" value="UniProtKB-SubCell"/>
</dbReference>
<dbReference type="GO" id="GO:0004190">
    <property type="term" value="F:aspartic-type endopeptidase activity"/>
    <property type="evidence" value="ECO:0007669"/>
    <property type="project" value="UniProtKB-UniRule"/>
</dbReference>
<dbReference type="GO" id="GO:0006508">
    <property type="term" value="P:proteolysis"/>
    <property type="evidence" value="ECO:0007669"/>
    <property type="project" value="UniProtKB-KW"/>
</dbReference>
<dbReference type="HAMAP" id="MF_00161">
    <property type="entry name" value="LspA"/>
    <property type="match status" value="1"/>
</dbReference>
<dbReference type="InterPro" id="IPR001872">
    <property type="entry name" value="Peptidase_A8"/>
</dbReference>
<dbReference type="NCBIfam" id="TIGR00077">
    <property type="entry name" value="lspA"/>
    <property type="match status" value="1"/>
</dbReference>
<dbReference type="PANTHER" id="PTHR33695">
    <property type="entry name" value="LIPOPROTEIN SIGNAL PEPTIDASE"/>
    <property type="match status" value="1"/>
</dbReference>
<dbReference type="PANTHER" id="PTHR33695:SF1">
    <property type="entry name" value="LIPOPROTEIN SIGNAL PEPTIDASE"/>
    <property type="match status" value="1"/>
</dbReference>
<dbReference type="Pfam" id="PF01252">
    <property type="entry name" value="Peptidase_A8"/>
    <property type="match status" value="1"/>
</dbReference>
<dbReference type="PRINTS" id="PR00781">
    <property type="entry name" value="LIPOSIGPTASE"/>
</dbReference>
<dbReference type="PROSITE" id="PS00855">
    <property type="entry name" value="SPASE_II"/>
    <property type="match status" value="1"/>
</dbReference>
<name>LSPA_SALTI</name>
<evidence type="ECO:0000255" key="1">
    <source>
        <dbReference type="HAMAP-Rule" id="MF_00161"/>
    </source>
</evidence>
<protein>
    <recommendedName>
        <fullName evidence="1">Lipoprotein signal peptidase</fullName>
        <ecNumber evidence="1">3.4.23.36</ecNumber>
    </recommendedName>
    <alternativeName>
        <fullName evidence="1">Prolipoprotein signal peptidase</fullName>
    </alternativeName>
    <alternativeName>
        <fullName evidence="1">Signal peptidase II</fullName>
        <shortName evidence="1">SPase II</shortName>
    </alternativeName>
</protein>
<gene>
    <name evidence="1" type="primary">lspA</name>
    <name type="ordered locus">STY0056</name>
    <name type="ordered locus">t0049</name>
</gene>
<proteinExistence type="inferred from homology"/>
<feature type="chain" id="PRO_0000178809" description="Lipoprotein signal peptidase">
    <location>
        <begin position="1"/>
        <end position="166"/>
    </location>
</feature>
<feature type="transmembrane region" description="Helical" evidence="1">
    <location>
        <begin position="12"/>
        <end position="32"/>
    </location>
</feature>
<feature type="transmembrane region" description="Helical" evidence="1">
    <location>
        <begin position="70"/>
        <end position="90"/>
    </location>
</feature>
<feature type="transmembrane region" description="Helical" evidence="1">
    <location>
        <begin position="102"/>
        <end position="122"/>
    </location>
</feature>
<feature type="transmembrane region" description="Helical" evidence="1">
    <location>
        <begin position="137"/>
        <end position="157"/>
    </location>
</feature>
<feature type="active site" evidence="1">
    <location>
        <position position="123"/>
    </location>
</feature>
<feature type="active site" evidence="1">
    <location>
        <position position="141"/>
    </location>
</feature>
<comment type="function">
    <text evidence="1">This protein specifically catalyzes the removal of signal peptides from prolipoproteins.</text>
</comment>
<comment type="catalytic activity">
    <reaction evidence="1">
        <text>Release of signal peptides from bacterial membrane prolipoproteins. Hydrolyzes -Xaa-Yaa-Zaa-|-(S,diacylglyceryl)Cys-, in which Xaa is hydrophobic (preferably Leu), and Yaa (Ala or Ser) and Zaa (Gly or Ala) have small, neutral side chains.</text>
        <dbReference type="EC" id="3.4.23.36"/>
    </reaction>
</comment>
<comment type="pathway">
    <text evidence="1">Protein modification; lipoprotein biosynthesis (signal peptide cleavage).</text>
</comment>
<comment type="subcellular location">
    <subcellularLocation>
        <location evidence="1">Cell inner membrane</location>
        <topology evidence="1">Multi-pass membrane protein</topology>
    </subcellularLocation>
</comment>
<comment type="similarity">
    <text evidence="1">Belongs to the peptidase A8 family.</text>
</comment>
<keyword id="KW-0064">Aspartyl protease</keyword>
<keyword id="KW-0997">Cell inner membrane</keyword>
<keyword id="KW-1003">Cell membrane</keyword>
<keyword id="KW-0378">Hydrolase</keyword>
<keyword id="KW-0472">Membrane</keyword>
<keyword id="KW-0645">Protease</keyword>
<keyword id="KW-0812">Transmembrane</keyword>
<keyword id="KW-1133">Transmembrane helix</keyword>
<reference key="1">
    <citation type="journal article" date="2001" name="Nature">
        <title>Complete genome sequence of a multiple drug resistant Salmonella enterica serovar Typhi CT18.</title>
        <authorList>
            <person name="Parkhill J."/>
            <person name="Dougan G."/>
            <person name="James K.D."/>
            <person name="Thomson N.R."/>
            <person name="Pickard D."/>
            <person name="Wain J."/>
            <person name="Churcher C.M."/>
            <person name="Mungall K.L."/>
            <person name="Bentley S.D."/>
            <person name="Holden M.T.G."/>
            <person name="Sebaihia M."/>
            <person name="Baker S."/>
            <person name="Basham D."/>
            <person name="Brooks K."/>
            <person name="Chillingworth T."/>
            <person name="Connerton P."/>
            <person name="Cronin A."/>
            <person name="Davis P."/>
            <person name="Davies R.M."/>
            <person name="Dowd L."/>
            <person name="White N."/>
            <person name="Farrar J."/>
            <person name="Feltwell T."/>
            <person name="Hamlin N."/>
            <person name="Haque A."/>
            <person name="Hien T.T."/>
            <person name="Holroyd S."/>
            <person name="Jagels K."/>
            <person name="Krogh A."/>
            <person name="Larsen T.S."/>
            <person name="Leather S."/>
            <person name="Moule S."/>
            <person name="O'Gaora P."/>
            <person name="Parry C."/>
            <person name="Quail M.A."/>
            <person name="Rutherford K.M."/>
            <person name="Simmonds M."/>
            <person name="Skelton J."/>
            <person name="Stevens K."/>
            <person name="Whitehead S."/>
            <person name="Barrell B.G."/>
        </authorList>
    </citation>
    <scope>NUCLEOTIDE SEQUENCE [LARGE SCALE GENOMIC DNA]</scope>
    <source>
        <strain>CT18</strain>
    </source>
</reference>
<reference key="2">
    <citation type="journal article" date="2003" name="J. Bacteriol.">
        <title>Comparative genomics of Salmonella enterica serovar Typhi strains Ty2 and CT18.</title>
        <authorList>
            <person name="Deng W."/>
            <person name="Liou S.-R."/>
            <person name="Plunkett G. III"/>
            <person name="Mayhew G.F."/>
            <person name="Rose D.J."/>
            <person name="Burland V."/>
            <person name="Kodoyianni V."/>
            <person name="Schwartz D.C."/>
            <person name="Blattner F.R."/>
        </authorList>
    </citation>
    <scope>NUCLEOTIDE SEQUENCE [LARGE SCALE GENOMIC DNA]</scope>
    <source>
        <strain>ATCC 700931 / Ty2</strain>
    </source>
</reference>
<sequence>MSKPLCSTGLRWLWLVVVVLIIDLGSKYLILQNFALGDTVGLFPSLNLHYARNYGAAFSFLADSGSWQRWFFAGIAIGICVILLVMMYRSKATQKLNNIAYALIIGGALGNLFDRLWHGFVVDMIDFYVGDWHFATFNLADTAICIGAALIVLEGFLPKPTAKEQA</sequence>